<accession>O31863</accession>
<gene>
    <name type="primary">yozD</name>
    <name type="ordered locus">BSU19660</name>
</gene>
<reference key="1">
    <citation type="journal article" date="1997" name="Nature">
        <title>The complete genome sequence of the Gram-positive bacterium Bacillus subtilis.</title>
        <authorList>
            <person name="Kunst F."/>
            <person name="Ogasawara N."/>
            <person name="Moszer I."/>
            <person name="Albertini A.M."/>
            <person name="Alloni G."/>
            <person name="Azevedo V."/>
            <person name="Bertero M.G."/>
            <person name="Bessieres P."/>
            <person name="Bolotin A."/>
            <person name="Borchert S."/>
            <person name="Borriss R."/>
            <person name="Boursier L."/>
            <person name="Brans A."/>
            <person name="Braun M."/>
            <person name="Brignell S.C."/>
            <person name="Bron S."/>
            <person name="Brouillet S."/>
            <person name="Bruschi C.V."/>
            <person name="Caldwell B."/>
            <person name="Capuano V."/>
            <person name="Carter N.M."/>
            <person name="Choi S.-K."/>
            <person name="Codani J.-J."/>
            <person name="Connerton I.F."/>
            <person name="Cummings N.J."/>
            <person name="Daniel R.A."/>
            <person name="Denizot F."/>
            <person name="Devine K.M."/>
            <person name="Duesterhoeft A."/>
            <person name="Ehrlich S.D."/>
            <person name="Emmerson P.T."/>
            <person name="Entian K.-D."/>
            <person name="Errington J."/>
            <person name="Fabret C."/>
            <person name="Ferrari E."/>
            <person name="Foulger D."/>
            <person name="Fritz C."/>
            <person name="Fujita M."/>
            <person name="Fujita Y."/>
            <person name="Fuma S."/>
            <person name="Galizzi A."/>
            <person name="Galleron N."/>
            <person name="Ghim S.-Y."/>
            <person name="Glaser P."/>
            <person name="Goffeau A."/>
            <person name="Golightly E.J."/>
            <person name="Grandi G."/>
            <person name="Guiseppi G."/>
            <person name="Guy B.J."/>
            <person name="Haga K."/>
            <person name="Haiech J."/>
            <person name="Harwood C.R."/>
            <person name="Henaut A."/>
            <person name="Hilbert H."/>
            <person name="Holsappel S."/>
            <person name="Hosono S."/>
            <person name="Hullo M.-F."/>
            <person name="Itaya M."/>
            <person name="Jones L.-M."/>
            <person name="Joris B."/>
            <person name="Karamata D."/>
            <person name="Kasahara Y."/>
            <person name="Klaerr-Blanchard M."/>
            <person name="Klein C."/>
            <person name="Kobayashi Y."/>
            <person name="Koetter P."/>
            <person name="Koningstein G."/>
            <person name="Krogh S."/>
            <person name="Kumano M."/>
            <person name="Kurita K."/>
            <person name="Lapidus A."/>
            <person name="Lardinois S."/>
            <person name="Lauber J."/>
            <person name="Lazarevic V."/>
            <person name="Lee S.-M."/>
            <person name="Levine A."/>
            <person name="Liu H."/>
            <person name="Masuda S."/>
            <person name="Mauel C."/>
            <person name="Medigue C."/>
            <person name="Medina N."/>
            <person name="Mellado R.P."/>
            <person name="Mizuno M."/>
            <person name="Moestl D."/>
            <person name="Nakai S."/>
            <person name="Noback M."/>
            <person name="Noone D."/>
            <person name="O'Reilly M."/>
            <person name="Ogawa K."/>
            <person name="Ogiwara A."/>
            <person name="Oudega B."/>
            <person name="Park S.-H."/>
            <person name="Parro V."/>
            <person name="Pohl T.M."/>
            <person name="Portetelle D."/>
            <person name="Porwollik S."/>
            <person name="Prescott A.M."/>
            <person name="Presecan E."/>
            <person name="Pujic P."/>
            <person name="Purnelle B."/>
            <person name="Rapoport G."/>
            <person name="Rey M."/>
            <person name="Reynolds S."/>
            <person name="Rieger M."/>
            <person name="Rivolta C."/>
            <person name="Rocha E."/>
            <person name="Roche B."/>
            <person name="Rose M."/>
            <person name="Sadaie Y."/>
            <person name="Sato T."/>
            <person name="Scanlan E."/>
            <person name="Schleich S."/>
            <person name="Schroeter R."/>
            <person name="Scoffone F."/>
            <person name="Sekiguchi J."/>
            <person name="Sekowska A."/>
            <person name="Seror S.J."/>
            <person name="Serror P."/>
            <person name="Shin B.-S."/>
            <person name="Soldo B."/>
            <person name="Sorokin A."/>
            <person name="Tacconi E."/>
            <person name="Takagi T."/>
            <person name="Takahashi H."/>
            <person name="Takemaru K."/>
            <person name="Takeuchi M."/>
            <person name="Tamakoshi A."/>
            <person name="Tanaka T."/>
            <person name="Terpstra P."/>
            <person name="Tognoni A."/>
            <person name="Tosato V."/>
            <person name="Uchiyama S."/>
            <person name="Vandenbol M."/>
            <person name="Vannier F."/>
            <person name="Vassarotti A."/>
            <person name="Viari A."/>
            <person name="Wambutt R."/>
            <person name="Wedler E."/>
            <person name="Wedler H."/>
            <person name="Weitzenegger T."/>
            <person name="Winters P."/>
            <person name="Wipat A."/>
            <person name="Yamamoto H."/>
            <person name="Yamane K."/>
            <person name="Yasumoto K."/>
            <person name="Yata K."/>
            <person name="Yoshida K."/>
            <person name="Yoshikawa H.-F."/>
            <person name="Zumstein E."/>
            <person name="Yoshikawa H."/>
            <person name="Danchin A."/>
        </authorList>
    </citation>
    <scope>NUCLEOTIDE SEQUENCE [LARGE SCALE GENOMIC DNA]</scope>
    <source>
        <strain>168</strain>
    </source>
</reference>
<name>YOZD_BACSU</name>
<organism>
    <name type="scientific">Bacillus subtilis (strain 168)</name>
    <dbReference type="NCBI Taxonomy" id="224308"/>
    <lineage>
        <taxon>Bacteria</taxon>
        <taxon>Bacillati</taxon>
        <taxon>Bacillota</taxon>
        <taxon>Bacilli</taxon>
        <taxon>Bacillales</taxon>
        <taxon>Bacillaceae</taxon>
        <taxon>Bacillus</taxon>
    </lineage>
</organism>
<feature type="chain" id="PRO_0000049669" description="Uncharacterized protein YozD">
    <location>
        <begin position="1"/>
        <end position="58"/>
    </location>
</feature>
<dbReference type="EMBL" id="AL009126">
    <property type="protein sequence ID" value="CAB13857.1"/>
    <property type="molecule type" value="Genomic_DNA"/>
</dbReference>
<dbReference type="PIR" id="H69930">
    <property type="entry name" value="H69930"/>
</dbReference>
<dbReference type="RefSeq" id="NP_389847.1">
    <property type="nucleotide sequence ID" value="NC_000964.3"/>
</dbReference>
<dbReference type="RefSeq" id="WP_003231166.1">
    <property type="nucleotide sequence ID" value="NZ_OZ025638.1"/>
</dbReference>
<dbReference type="FunCoup" id="O31863">
    <property type="interactions" value="8"/>
</dbReference>
<dbReference type="IntAct" id="O31863">
    <property type="interactions" value="14"/>
</dbReference>
<dbReference type="STRING" id="224308.BSU19660"/>
<dbReference type="PaxDb" id="224308-BSU19660"/>
<dbReference type="EnsemblBacteria" id="CAB13857">
    <property type="protein sequence ID" value="CAB13857"/>
    <property type="gene ID" value="BSU_19660"/>
</dbReference>
<dbReference type="GeneID" id="940042"/>
<dbReference type="KEGG" id="bsu:BSU19660"/>
<dbReference type="PATRIC" id="fig|224308.179.peg.2151"/>
<dbReference type="eggNOG" id="ENOG502ZHTJ">
    <property type="taxonomic scope" value="Bacteria"/>
</dbReference>
<dbReference type="InParanoid" id="O31863"/>
<dbReference type="OrthoDB" id="2971944at2"/>
<dbReference type="BioCyc" id="BSUB:BSU19660-MONOMER"/>
<dbReference type="Proteomes" id="UP000001570">
    <property type="component" value="Chromosome"/>
</dbReference>
<dbReference type="InterPro" id="IPR025545">
    <property type="entry name" value="YozD"/>
</dbReference>
<dbReference type="Pfam" id="PF14162">
    <property type="entry name" value="YozD"/>
    <property type="match status" value="1"/>
</dbReference>
<keyword id="KW-1185">Reference proteome</keyword>
<protein>
    <recommendedName>
        <fullName>Uncharacterized protein YozD</fullName>
    </recommendedName>
</protein>
<proteinExistence type="predicted"/>
<sequence>MKEIDLVIDTEEIAEFFYRELARRGYIPSEDELFEIADITFDYLIEKCMIDEELDEDE</sequence>